<organism evidence="4">
    <name type="scientific">Pithecopus nordestinus</name>
    <name type="common">Northeastern Brazilian leaf frog</name>
    <name type="synonym">Phyllomedusa nordestina</name>
    <dbReference type="NCBI Taxonomy" id="2034992"/>
    <lineage>
        <taxon>Eukaryota</taxon>
        <taxon>Metazoa</taxon>
        <taxon>Chordata</taxon>
        <taxon>Craniata</taxon>
        <taxon>Vertebrata</taxon>
        <taxon>Euteleostomi</taxon>
        <taxon>Amphibia</taxon>
        <taxon>Batrachia</taxon>
        <taxon>Anura</taxon>
        <taxon>Neobatrachia</taxon>
        <taxon>Hyloidea</taxon>
        <taxon>Hylidae</taxon>
        <taxon>Phyllomedusinae</taxon>
        <taxon>Pithecopus</taxon>
    </lineage>
</organism>
<comment type="function">
    <text evidence="1 3">Has antiparasitic activity against trypomastigote form of T.cruzi (IC(50)=0.46 uM) in vitro but not against L.infantum (PubMed:24113627). Probably acts by permeabilizing cell membranes (PubMed:24113627). In vitro, shows no cytotoxicity against macrophages (PubMed:24113627). Has antibacterial activity (By similarity).</text>
</comment>
<comment type="subcellular location">
    <subcellularLocation>
        <location evidence="3">Secreted</location>
    </subcellularLocation>
</comment>
<comment type="tissue specificity">
    <text evidence="6">Expressed by the skin glands.</text>
</comment>
<comment type="mass spectrometry" mass="2012.44" method="Electrospray" evidence="3"/>
<comment type="similarity">
    <text evidence="5">Belongs to the frog skin active peptide (FSAP) family. Phylloseptin subfamily.</text>
</comment>
<comment type="online information" name="The antimicrobial peptide database">
    <link uri="https://wangapd3.com/database/query_output.php?ID=00954"/>
</comment>
<evidence type="ECO:0000250" key="1">
    <source>
        <dbReference type="UniProtKB" id="P85882"/>
    </source>
</evidence>
<evidence type="ECO:0000250" key="2">
    <source>
        <dbReference type="UniProtKB" id="P85883"/>
    </source>
</evidence>
<evidence type="ECO:0000269" key="3">
    <source>
    </source>
</evidence>
<evidence type="ECO:0000303" key="4">
    <source>
    </source>
</evidence>
<evidence type="ECO:0000305" key="5"/>
<evidence type="ECO:0000305" key="6">
    <source>
    </source>
</evidence>
<sequence length="19" mass="2013">FLSLIPTAINAVSALAKHF</sequence>
<name>PLS3_PITNO</name>
<feature type="peptide" id="PRO_0000441009" description="Phylloseptin-N3" evidence="3">
    <location>
        <begin position="1"/>
        <end position="19"/>
    </location>
</feature>
<feature type="modified residue" description="Phenylalanine amide" evidence="3">
    <location>
        <position position="19"/>
    </location>
</feature>
<proteinExistence type="evidence at protein level"/>
<accession>C0HKQ0</accession>
<reference evidence="5" key="1">
    <citation type="journal article" date="2013" name="Exp. Parasitol.">
        <title>Antimicrobial peptides isolated from Phyllomedusa nordestina (Amphibia) alter the permeability of plasma membrane of Leishmania and Trypanosoma cruzi.</title>
        <authorList>
            <person name="Pinto E.G."/>
            <person name="Pimenta D.C."/>
            <person name="Antoniazzi M.M."/>
            <person name="Jared C."/>
            <person name="Tempone A.G."/>
        </authorList>
    </citation>
    <scope>PROTEIN SEQUENCE</scope>
    <scope>FUNCTION</scope>
    <scope>SUBCELLULAR LOCATION</scope>
    <scope>MASS SPECTROMETRY</scope>
    <scope>AMIDATION AT PHE-19</scope>
    <source>
        <tissue evidence="4">Skin secretion</tissue>
    </source>
</reference>
<keyword id="KW-0027">Amidation</keyword>
<keyword id="KW-0878">Amphibian defense peptide</keyword>
<keyword id="KW-0044">Antibiotic</keyword>
<keyword id="KW-0929">Antimicrobial</keyword>
<keyword id="KW-0903">Direct protein sequencing</keyword>
<keyword id="KW-0964">Secreted</keyword>
<protein>
    <recommendedName>
        <fullName evidence="5">Phylloseptin-N3</fullName>
        <shortName evidence="5">PLS-N3</shortName>
    </recommendedName>
    <alternativeName>
        <fullName evidence="4">Phylloseptin-8</fullName>
        <shortName evidence="2">PS-8</shortName>
    </alternativeName>
</protein>
<dbReference type="GO" id="GO:0005576">
    <property type="term" value="C:extracellular region"/>
    <property type="evidence" value="ECO:0007669"/>
    <property type="project" value="UniProtKB-SubCell"/>
</dbReference>
<dbReference type="GO" id="GO:0042742">
    <property type="term" value="P:defense response to bacterium"/>
    <property type="evidence" value="ECO:0007669"/>
    <property type="project" value="UniProtKB-KW"/>
</dbReference>